<proteinExistence type="inferred from homology"/>
<feature type="chain" id="PRO_0000293763" description="Small ribosomal subunit protein uS3">
    <location>
        <begin position="1"/>
        <end position="266"/>
    </location>
</feature>
<feature type="domain" description="KH type-2" evidence="1">
    <location>
        <begin position="39"/>
        <end position="107"/>
    </location>
</feature>
<feature type="region of interest" description="Disordered" evidence="2">
    <location>
        <begin position="218"/>
        <end position="266"/>
    </location>
</feature>
<feature type="compositionally biased region" description="Basic and acidic residues" evidence="2">
    <location>
        <begin position="230"/>
        <end position="241"/>
    </location>
</feature>
<feature type="compositionally biased region" description="Basic and acidic residues" evidence="2">
    <location>
        <begin position="257"/>
        <end position="266"/>
    </location>
</feature>
<keyword id="KW-0687">Ribonucleoprotein</keyword>
<keyword id="KW-0689">Ribosomal protein</keyword>
<keyword id="KW-0694">RNA-binding</keyword>
<keyword id="KW-0699">rRNA-binding</keyword>
<name>RS3_BURCH</name>
<organism>
    <name type="scientific">Burkholderia cenocepacia (strain HI2424)</name>
    <dbReference type="NCBI Taxonomy" id="331272"/>
    <lineage>
        <taxon>Bacteria</taxon>
        <taxon>Pseudomonadati</taxon>
        <taxon>Pseudomonadota</taxon>
        <taxon>Betaproteobacteria</taxon>
        <taxon>Burkholderiales</taxon>
        <taxon>Burkholderiaceae</taxon>
        <taxon>Burkholderia</taxon>
        <taxon>Burkholderia cepacia complex</taxon>
    </lineage>
</organism>
<accession>A0K3N1</accession>
<sequence>MGQKIHPTGFRLAVSRNWASRWYANNNNFAAMLQEDIGVREYLKKKLKNASVGRVVIERPAKNARITIYSSRPGVVIGKKGEDIEQLKTELQRRMGVPVHVNIEEIRKPETDAQLIADSITQQLERRIMFRRAMKRAMQNAMRLGAQGIKIMSAGRLNGIEIARTEWYREGRVPLHTLRADIDYATSEAKTTYGIIGVKVWVYKGDTLGRNDAPVVEEVAEDKRPRRNARPGDRRPRRDGEGGAPGARRGAPRRGAGKPEDGKTGE</sequence>
<gene>
    <name evidence="1" type="primary">rpsC</name>
    <name type="ordered locus">Bcen2424_0354</name>
</gene>
<evidence type="ECO:0000255" key="1">
    <source>
        <dbReference type="HAMAP-Rule" id="MF_01309"/>
    </source>
</evidence>
<evidence type="ECO:0000256" key="2">
    <source>
        <dbReference type="SAM" id="MobiDB-lite"/>
    </source>
</evidence>
<evidence type="ECO:0000305" key="3"/>
<protein>
    <recommendedName>
        <fullName evidence="1">Small ribosomal subunit protein uS3</fullName>
    </recommendedName>
    <alternativeName>
        <fullName evidence="3">30S ribosomal protein S3</fullName>
    </alternativeName>
</protein>
<comment type="function">
    <text evidence="1">Binds the lower part of the 30S subunit head. Binds mRNA in the 70S ribosome, positioning it for translation.</text>
</comment>
<comment type="subunit">
    <text evidence="1">Part of the 30S ribosomal subunit. Forms a tight complex with proteins S10 and S14.</text>
</comment>
<comment type="similarity">
    <text evidence="1">Belongs to the universal ribosomal protein uS3 family.</text>
</comment>
<dbReference type="EMBL" id="CP000458">
    <property type="protein sequence ID" value="ABK07108.1"/>
    <property type="molecule type" value="Genomic_DNA"/>
</dbReference>
<dbReference type="RefSeq" id="WP_006482899.1">
    <property type="nucleotide sequence ID" value="NC_008542.1"/>
</dbReference>
<dbReference type="SMR" id="A0K3N1"/>
<dbReference type="GeneID" id="98107154"/>
<dbReference type="KEGG" id="bch:Bcen2424_0354"/>
<dbReference type="HOGENOM" id="CLU_058591_0_2_4"/>
<dbReference type="GO" id="GO:0022627">
    <property type="term" value="C:cytosolic small ribosomal subunit"/>
    <property type="evidence" value="ECO:0007669"/>
    <property type="project" value="TreeGrafter"/>
</dbReference>
<dbReference type="GO" id="GO:0003729">
    <property type="term" value="F:mRNA binding"/>
    <property type="evidence" value="ECO:0007669"/>
    <property type="project" value="UniProtKB-UniRule"/>
</dbReference>
<dbReference type="GO" id="GO:0019843">
    <property type="term" value="F:rRNA binding"/>
    <property type="evidence" value="ECO:0007669"/>
    <property type="project" value="UniProtKB-UniRule"/>
</dbReference>
<dbReference type="GO" id="GO:0003735">
    <property type="term" value="F:structural constituent of ribosome"/>
    <property type="evidence" value="ECO:0007669"/>
    <property type="project" value="InterPro"/>
</dbReference>
<dbReference type="GO" id="GO:0006412">
    <property type="term" value="P:translation"/>
    <property type="evidence" value="ECO:0007669"/>
    <property type="project" value="UniProtKB-UniRule"/>
</dbReference>
<dbReference type="CDD" id="cd02412">
    <property type="entry name" value="KH-II_30S_S3"/>
    <property type="match status" value="1"/>
</dbReference>
<dbReference type="FunFam" id="3.30.1140.32:FF:000006">
    <property type="entry name" value="30S ribosomal protein S3"/>
    <property type="match status" value="1"/>
</dbReference>
<dbReference type="FunFam" id="3.30.300.20:FF:000001">
    <property type="entry name" value="30S ribosomal protein S3"/>
    <property type="match status" value="1"/>
</dbReference>
<dbReference type="Gene3D" id="3.30.300.20">
    <property type="match status" value="1"/>
</dbReference>
<dbReference type="Gene3D" id="3.30.1140.32">
    <property type="entry name" value="Ribosomal protein S3, C-terminal domain"/>
    <property type="match status" value="1"/>
</dbReference>
<dbReference type="HAMAP" id="MF_01309_B">
    <property type="entry name" value="Ribosomal_uS3_B"/>
    <property type="match status" value="1"/>
</dbReference>
<dbReference type="InterPro" id="IPR004087">
    <property type="entry name" value="KH_dom"/>
</dbReference>
<dbReference type="InterPro" id="IPR015946">
    <property type="entry name" value="KH_dom-like_a/b"/>
</dbReference>
<dbReference type="InterPro" id="IPR004044">
    <property type="entry name" value="KH_dom_type_2"/>
</dbReference>
<dbReference type="InterPro" id="IPR009019">
    <property type="entry name" value="KH_sf_prok-type"/>
</dbReference>
<dbReference type="InterPro" id="IPR036419">
    <property type="entry name" value="Ribosomal_S3_C_sf"/>
</dbReference>
<dbReference type="InterPro" id="IPR005704">
    <property type="entry name" value="Ribosomal_uS3_bac-typ"/>
</dbReference>
<dbReference type="InterPro" id="IPR001351">
    <property type="entry name" value="Ribosomal_uS3_C"/>
</dbReference>
<dbReference type="InterPro" id="IPR018280">
    <property type="entry name" value="Ribosomal_uS3_CS"/>
</dbReference>
<dbReference type="NCBIfam" id="TIGR01009">
    <property type="entry name" value="rpsC_bact"/>
    <property type="match status" value="1"/>
</dbReference>
<dbReference type="PANTHER" id="PTHR11760">
    <property type="entry name" value="30S/40S RIBOSOMAL PROTEIN S3"/>
    <property type="match status" value="1"/>
</dbReference>
<dbReference type="PANTHER" id="PTHR11760:SF19">
    <property type="entry name" value="SMALL RIBOSOMAL SUBUNIT PROTEIN US3C"/>
    <property type="match status" value="1"/>
</dbReference>
<dbReference type="Pfam" id="PF07650">
    <property type="entry name" value="KH_2"/>
    <property type="match status" value="1"/>
</dbReference>
<dbReference type="Pfam" id="PF00189">
    <property type="entry name" value="Ribosomal_S3_C"/>
    <property type="match status" value="1"/>
</dbReference>
<dbReference type="SMART" id="SM00322">
    <property type="entry name" value="KH"/>
    <property type="match status" value="1"/>
</dbReference>
<dbReference type="SUPFAM" id="SSF54814">
    <property type="entry name" value="Prokaryotic type KH domain (KH-domain type II)"/>
    <property type="match status" value="1"/>
</dbReference>
<dbReference type="SUPFAM" id="SSF54821">
    <property type="entry name" value="Ribosomal protein S3 C-terminal domain"/>
    <property type="match status" value="1"/>
</dbReference>
<dbReference type="PROSITE" id="PS50823">
    <property type="entry name" value="KH_TYPE_2"/>
    <property type="match status" value="1"/>
</dbReference>
<dbReference type="PROSITE" id="PS00548">
    <property type="entry name" value="RIBOSOMAL_S3"/>
    <property type="match status" value="1"/>
</dbReference>
<reference key="1">
    <citation type="submission" date="2006-08" db="EMBL/GenBank/DDBJ databases">
        <title>Complete sequence of chromosome 1 of Burkholderia cenocepacia HI2424.</title>
        <authorList>
            <person name="Copeland A."/>
            <person name="Lucas S."/>
            <person name="Lapidus A."/>
            <person name="Barry K."/>
            <person name="Detter J.C."/>
            <person name="Glavina del Rio T."/>
            <person name="Hammon N."/>
            <person name="Israni S."/>
            <person name="Pitluck S."/>
            <person name="Chain P."/>
            <person name="Malfatti S."/>
            <person name="Shin M."/>
            <person name="Vergez L."/>
            <person name="Schmutz J."/>
            <person name="Larimer F."/>
            <person name="Land M."/>
            <person name="Hauser L."/>
            <person name="Kyrpides N."/>
            <person name="Kim E."/>
            <person name="LiPuma J.J."/>
            <person name="Gonzalez C.F."/>
            <person name="Konstantinidis K."/>
            <person name="Tiedje J.M."/>
            <person name="Richardson P."/>
        </authorList>
    </citation>
    <scope>NUCLEOTIDE SEQUENCE [LARGE SCALE GENOMIC DNA]</scope>
    <source>
        <strain>HI2424</strain>
    </source>
</reference>